<organism>
    <name type="scientific">Haloarcula marismortui (strain ATCC 43049 / DSM 3752 / JCM 8966 / VKM B-1809)</name>
    <name type="common">Halobacterium marismortui</name>
    <dbReference type="NCBI Taxonomy" id="272569"/>
    <lineage>
        <taxon>Archaea</taxon>
        <taxon>Methanobacteriati</taxon>
        <taxon>Methanobacteriota</taxon>
        <taxon>Stenosarchaea group</taxon>
        <taxon>Halobacteria</taxon>
        <taxon>Halobacteriales</taxon>
        <taxon>Haloarculaceae</taxon>
        <taxon>Haloarcula</taxon>
    </lineage>
</organism>
<feature type="chain" id="PRO_0000403130" description="tRNA(Met) cytidine acetyltransferase TmcA">
    <location>
        <begin position="1"/>
        <end position="775"/>
    </location>
</feature>
<feature type="domain" description="N-acetyltransferase" evidence="1">
    <location>
        <begin position="438"/>
        <end position="623"/>
    </location>
</feature>
<feature type="region of interest" description="Disordered" evidence="2">
    <location>
        <begin position="1"/>
        <end position="33"/>
    </location>
</feature>
<feature type="region of interest" description="Disordered" evidence="2">
    <location>
        <begin position="191"/>
        <end position="215"/>
    </location>
</feature>
<feature type="compositionally biased region" description="Pro residues" evidence="2">
    <location>
        <begin position="199"/>
        <end position="212"/>
    </location>
</feature>
<feature type="binding site" evidence="1">
    <location>
        <position position="230"/>
    </location>
    <ligand>
        <name>ATP</name>
        <dbReference type="ChEBI" id="CHEBI:30616"/>
    </ligand>
</feature>
<feature type="binding site" evidence="1">
    <location>
        <begin position="254"/>
        <end position="263"/>
    </location>
    <ligand>
        <name>ATP</name>
        <dbReference type="ChEBI" id="CHEBI:30616"/>
    </ligand>
</feature>
<feature type="binding site" evidence="1">
    <location>
        <position position="403"/>
    </location>
    <ligand>
        <name>ATP</name>
        <dbReference type="ChEBI" id="CHEBI:30616"/>
    </ligand>
</feature>
<feature type="binding site" evidence="1">
    <location>
        <begin position="549"/>
        <end position="551"/>
    </location>
    <ligand>
        <name>acetyl-CoA</name>
        <dbReference type="ChEBI" id="CHEBI:57288"/>
    </ligand>
</feature>
<feature type="binding site" evidence="1">
    <location>
        <begin position="556"/>
        <end position="562"/>
    </location>
    <ligand>
        <name>acetyl-CoA</name>
        <dbReference type="ChEBI" id="CHEBI:57288"/>
    </ligand>
</feature>
<feature type="binding site" evidence="1">
    <location>
        <position position="588"/>
    </location>
    <ligand>
        <name>acetyl-CoA</name>
        <dbReference type="ChEBI" id="CHEBI:57288"/>
    </ligand>
</feature>
<accession>Q5V5M5</accession>
<protein>
    <recommendedName>
        <fullName evidence="1">tRNA(Met) cytidine acetyltransferase TmcA</fullName>
        <ecNumber evidence="1">2.3.1.193</ecNumber>
    </recommendedName>
</protein>
<comment type="function">
    <text evidence="1">Catalyzes the formation of N(4)-acetylcytidine (ac(4)C) at the wobble position of tRNA(Met), by using acetyl-CoA as an acetyl donor and ATP (or GTP).</text>
</comment>
<comment type="catalytic activity">
    <reaction evidence="1">
        <text>cytidine(34) in elongator tRNA(Met) + acetyl-CoA + ATP + H2O = N(4)-acetylcytidine(34) in elongator tRNA(Met) + ADP + phosphate + CoA + H(+)</text>
        <dbReference type="Rhea" id="RHEA:43788"/>
        <dbReference type="Rhea" id="RHEA-COMP:10693"/>
        <dbReference type="Rhea" id="RHEA-COMP:10694"/>
        <dbReference type="ChEBI" id="CHEBI:15377"/>
        <dbReference type="ChEBI" id="CHEBI:15378"/>
        <dbReference type="ChEBI" id="CHEBI:30616"/>
        <dbReference type="ChEBI" id="CHEBI:43474"/>
        <dbReference type="ChEBI" id="CHEBI:57287"/>
        <dbReference type="ChEBI" id="CHEBI:57288"/>
        <dbReference type="ChEBI" id="CHEBI:74900"/>
        <dbReference type="ChEBI" id="CHEBI:82748"/>
        <dbReference type="ChEBI" id="CHEBI:456216"/>
        <dbReference type="EC" id="2.3.1.193"/>
    </reaction>
</comment>
<comment type="subcellular location">
    <subcellularLocation>
        <location evidence="1">Cytoplasm</location>
    </subcellularLocation>
</comment>
<comment type="similarity">
    <text evidence="1">Belongs to the RNA cytidine acetyltransferase family. TmcA subfamily.</text>
</comment>
<proteinExistence type="inferred from homology"/>
<name>TMCA_HALMA</name>
<reference key="1">
    <citation type="journal article" date="2004" name="Genome Res.">
        <title>Genome sequence of Haloarcula marismortui: a halophilic archaeon from the Dead Sea.</title>
        <authorList>
            <person name="Baliga N.S."/>
            <person name="Bonneau R."/>
            <person name="Facciotti M.T."/>
            <person name="Pan M."/>
            <person name="Glusman G."/>
            <person name="Deutsch E.W."/>
            <person name="Shannon P."/>
            <person name="Chiu Y."/>
            <person name="Weng R.S."/>
            <person name="Gan R.R."/>
            <person name="Hung P."/>
            <person name="Date S.V."/>
            <person name="Marcotte E."/>
            <person name="Hood L."/>
            <person name="Ng W.V."/>
        </authorList>
    </citation>
    <scope>NUCLEOTIDE SEQUENCE [LARGE SCALE GENOMIC DNA]</scope>
    <source>
        <strain>ATCC 43049 / DSM 3752 / JCM 8966 / VKM B-1809</strain>
    </source>
</reference>
<evidence type="ECO:0000255" key="1">
    <source>
        <dbReference type="HAMAP-Rule" id="MF_01886"/>
    </source>
</evidence>
<evidence type="ECO:0000256" key="2">
    <source>
        <dbReference type="SAM" id="MobiDB-lite"/>
    </source>
</evidence>
<keyword id="KW-0012">Acyltransferase</keyword>
<keyword id="KW-0067">ATP-binding</keyword>
<keyword id="KW-0963">Cytoplasm</keyword>
<keyword id="KW-0547">Nucleotide-binding</keyword>
<keyword id="KW-1185">Reference proteome</keyword>
<keyword id="KW-0694">RNA-binding</keyword>
<keyword id="KW-0808">Transferase</keyword>
<keyword id="KW-0819">tRNA processing</keyword>
<keyword id="KW-0820">tRNA-binding</keyword>
<dbReference type="EC" id="2.3.1.193" evidence="1"/>
<dbReference type="EMBL" id="AY596297">
    <property type="protein sequence ID" value="AAV45178.1"/>
    <property type="molecule type" value="Genomic_DNA"/>
</dbReference>
<dbReference type="RefSeq" id="WP_011222821.1">
    <property type="nucleotide sequence ID" value="NC_006396.1"/>
</dbReference>
<dbReference type="SMR" id="Q5V5M5"/>
<dbReference type="STRING" id="272569.rrnAC0101"/>
<dbReference type="PaxDb" id="272569-rrnAC0101"/>
<dbReference type="EnsemblBacteria" id="AAV45178">
    <property type="protein sequence ID" value="AAV45178"/>
    <property type="gene ID" value="rrnAC0101"/>
</dbReference>
<dbReference type="GeneID" id="40154411"/>
<dbReference type="KEGG" id="hma:rrnAC0101"/>
<dbReference type="PATRIC" id="fig|272569.17.peg.905"/>
<dbReference type="eggNOG" id="arCOG01951">
    <property type="taxonomic scope" value="Archaea"/>
</dbReference>
<dbReference type="HOGENOM" id="CLU_004652_1_0_2"/>
<dbReference type="Proteomes" id="UP000001169">
    <property type="component" value="Chromosome I"/>
</dbReference>
<dbReference type="GO" id="GO:0005737">
    <property type="term" value="C:cytoplasm"/>
    <property type="evidence" value="ECO:0007669"/>
    <property type="project" value="UniProtKB-SubCell"/>
</dbReference>
<dbReference type="GO" id="GO:1990883">
    <property type="term" value="F:18S rRNA cytidine N-acetyltransferase activity"/>
    <property type="evidence" value="ECO:0007669"/>
    <property type="project" value="TreeGrafter"/>
</dbReference>
<dbReference type="GO" id="GO:0005524">
    <property type="term" value="F:ATP binding"/>
    <property type="evidence" value="ECO:0007669"/>
    <property type="project" value="UniProtKB-UniRule"/>
</dbReference>
<dbReference type="GO" id="GO:0000049">
    <property type="term" value="F:tRNA binding"/>
    <property type="evidence" value="ECO:0007669"/>
    <property type="project" value="UniProtKB-UniRule"/>
</dbReference>
<dbReference type="GO" id="GO:0051392">
    <property type="term" value="F:tRNA N4-acetyltransferase activity"/>
    <property type="evidence" value="ECO:0007669"/>
    <property type="project" value="UniProtKB-UniRule"/>
</dbReference>
<dbReference type="GO" id="GO:1904812">
    <property type="term" value="P:rRNA acetylation involved in maturation of SSU-rRNA"/>
    <property type="evidence" value="ECO:0007669"/>
    <property type="project" value="TreeGrafter"/>
</dbReference>
<dbReference type="GO" id="GO:0051391">
    <property type="term" value="P:tRNA acetylation"/>
    <property type="evidence" value="ECO:0007669"/>
    <property type="project" value="UniProtKB-UniRule"/>
</dbReference>
<dbReference type="GO" id="GO:0002101">
    <property type="term" value="P:tRNA wobble cytosine modification"/>
    <property type="evidence" value="ECO:0007669"/>
    <property type="project" value="UniProtKB-UniRule"/>
</dbReference>
<dbReference type="Gene3D" id="3.40.50.11040">
    <property type="match status" value="1"/>
</dbReference>
<dbReference type="Gene3D" id="3.40.630.30">
    <property type="match status" value="1"/>
</dbReference>
<dbReference type="Gene3D" id="3.40.50.300">
    <property type="entry name" value="P-loop containing nucleotide triphosphate hydrolases"/>
    <property type="match status" value="1"/>
</dbReference>
<dbReference type="HAMAP" id="MF_01886">
    <property type="entry name" value="tRNA_acetyltr_TmcA"/>
    <property type="match status" value="1"/>
</dbReference>
<dbReference type="InterPro" id="IPR016181">
    <property type="entry name" value="Acyl_CoA_acyltransferase"/>
</dbReference>
<dbReference type="InterPro" id="IPR000182">
    <property type="entry name" value="GNAT_dom"/>
</dbReference>
<dbReference type="InterPro" id="IPR007807">
    <property type="entry name" value="NAT10/TcmA_helicase"/>
</dbReference>
<dbReference type="InterPro" id="IPR027417">
    <property type="entry name" value="P-loop_NTPase"/>
</dbReference>
<dbReference type="InterPro" id="IPR032672">
    <property type="entry name" value="TmcA/NAT10/Kre33"/>
</dbReference>
<dbReference type="InterPro" id="IPR013562">
    <property type="entry name" value="TmcA_N"/>
</dbReference>
<dbReference type="InterPro" id="IPR024914">
    <property type="entry name" value="tRNA_acetyltr_TmcA"/>
</dbReference>
<dbReference type="InterPro" id="IPR053477">
    <property type="entry name" value="tRNA_Cytidine_AcTrnsfr"/>
</dbReference>
<dbReference type="NCBIfam" id="NF041296">
    <property type="entry name" value="RNAactase_tcmA_Halo"/>
    <property type="match status" value="1"/>
</dbReference>
<dbReference type="PANTHER" id="PTHR10925">
    <property type="entry name" value="N-ACETYLTRANSFERASE 10"/>
    <property type="match status" value="1"/>
</dbReference>
<dbReference type="PANTHER" id="PTHR10925:SF5">
    <property type="entry name" value="RNA CYTIDINE ACETYLTRANSFERASE"/>
    <property type="match status" value="1"/>
</dbReference>
<dbReference type="Pfam" id="PF13718">
    <property type="entry name" value="GNAT_acetyltr_2"/>
    <property type="match status" value="1"/>
</dbReference>
<dbReference type="Pfam" id="PF05127">
    <property type="entry name" value="NAT10_TcmA_helicase"/>
    <property type="match status" value="1"/>
</dbReference>
<dbReference type="Pfam" id="PF08351">
    <property type="entry name" value="TmcA_N"/>
    <property type="match status" value="1"/>
</dbReference>
<dbReference type="SUPFAM" id="SSF55729">
    <property type="entry name" value="Acyl-CoA N-acyltransferases (Nat)"/>
    <property type="match status" value="1"/>
</dbReference>
<dbReference type="SUPFAM" id="SSF52540">
    <property type="entry name" value="P-loop containing nucleoside triphosphate hydrolases"/>
    <property type="match status" value="1"/>
</dbReference>
<sequence length="775" mass="84319">MPTTVSGPIKSVPGERRDRQVHTGASATTGMDIARSLRAEARRANERRLLVLAGDPDRTRERAATALDLADVPSAETTVVGPEPFLDCEHHDQSRAEELLGRTRTAVVFDAHEELRPDAVGRTVGAVDGGGLYVLLAPPLETWPEERDGFDASLAVPPFGVEDVSGHFRRRFVETLRAHRGIAIVDVDRGTVEQDGLTDPPPSRPVPSPTPPTDAWFRSETYAQCLTDDQRDAVQAFESLQTAGEAVVVEADRGRGKSSAAGLAAGNLAAADRDVLVTGPQYRSAAEVFVRAAHLLEAFGVDFTRDRSSDPQRLDVAGAGCVRYAPPDEAASLPDGPDVVIVDEAAALPVRRLEQFLDAPAVTFATTVHGYEGAGRGFSVRFRDRLAESDLAVTDVSMTTPIRYSDADPVEVWAFRALLLDARPPVDQLIEDATPETVEYRQLSAADLLADTHLLREVFGLLVLAHYRTEPSDLARLLDAPNLTVRALTHEGHVVAVALLAQEGGLSASTRATMYEGGRVRGNMLPDVLSTQLRDEAAGVPVGQRVLRIATHAAVRSRGLGSKLLSEIRAEFADHVDWVGVSYGATPELVRFWADNGYNTVHLATSRNATSGEYSVVMLDPCSDDAAALAARHREWFQDRIAAVLSDPLDDCDPDVVRAVLRATDGERPVSLSEWEWRLVAGVPGGASVLDTNPKPFRDLTRRHLSHPADATALSPREERLLVRKVLQAHPWSTVTEELAFVSERECMRTLGGIVERLTRLYGDPWVQEELDRHL</sequence>
<gene>
    <name evidence="1" type="primary">tmcA</name>
    <name type="ordered locus">rrnAC0101</name>
</gene>